<gene>
    <name evidence="1" type="primary">fadI</name>
    <name type="ordered locus">YPDSF_2014</name>
</gene>
<name>FADI_YERPP</name>
<keyword id="KW-0012">Acyltransferase</keyword>
<keyword id="KW-0963">Cytoplasm</keyword>
<keyword id="KW-0276">Fatty acid metabolism</keyword>
<keyword id="KW-0442">Lipid degradation</keyword>
<keyword id="KW-0443">Lipid metabolism</keyword>
<keyword id="KW-0808">Transferase</keyword>
<sequence length="436" mass="46311">MSKPLPLVTRQGDRIVIVNGLRTPFAKQATAYHGVPAVDLGKIVVSELLARSGISSELIDQLVFGQVVQMPEAPNIAREIVLGTGMSVHTDAYSVSRACATSFQAVANVAESIIAGSVDIAIAGGADSSSVLPIGVSKALARTLVDANKARSLSQKLKLFSRLRLRDLLPVAPAVAEYSTGLRMGDTAEQMAKTYGISREDQDALALRSHQLAAEAWQQGWLHDEVMTAYIPPYREAIIEDNNIRKDSTLAQYAKLRPAFDRQHGSVTAANSTPLTDGAAAVLMMSESKAKALGLPPLGYLRSFAFSAIDVWQDMLLGPSYATPLALDRAGITLADLTLIDMHEAFAAQTLANLKMFASDTFAREKLGRSQAIGEVDMSKFNVLGGSIAYGHPFAATGARMITQTLNELRRRGGGLGLTTACAAGGLGAAMILEVE</sequence>
<reference key="1">
    <citation type="submission" date="2007-02" db="EMBL/GenBank/DDBJ databases">
        <title>Complete sequence of chromosome of Yersinia pestis Pestoides F.</title>
        <authorList>
            <consortium name="US DOE Joint Genome Institute"/>
            <person name="Copeland A."/>
            <person name="Lucas S."/>
            <person name="Lapidus A."/>
            <person name="Barry K."/>
            <person name="Detter J.C."/>
            <person name="Glavina del Rio T."/>
            <person name="Hammon N."/>
            <person name="Israni S."/>
            <person name="Dalin E."/>
            <person name="Tice H."/>
            <person name="Pitluck S."/>
            <person name="Di Bartolo G."/>
            <person name="Chain P."/>
            <person name="Malfatti S."/>
            <person name="Shin M."/>
            <person name="Vergez L."/>
            <person name="Schmutz J."/>
            <person name="Larimer F."/>
            <person name="Land M."/>
            <person name="Hauser L."/>
            <person name="Worsham P."/>
            <person name="Chu M."/>
            <person name="Bearden S."/>
            <person name="Garcia E."/>
            <person name="Richardson P."/>
        </authorList>
    </citation>
    <scope>NUCLEOTIDE SEQUENCE [LARGE SCALE GENOMIC DNA]</scope>
    <source>
        <strain>Pestoides F</strain>
    </source>
</reference>
<protein>
    <recommendedName>
        <fullName evidence="1">3-ketoacyl-CoA thiolase</fullName>
        <ecNumber evidence="1">2.3.1.16</ecNumber>
    </recommendedName>
    <alternativeName>
        <fullName evidence="1">ACSs</fullName>
    </alternativeName>
    <alternativeName>
        <fullName evidence="1">Acetyl-CoA acyltransferase</fullName>
    </alternativeName>
    <alternativeName>
        <fullName evidence="1">Acyl-CoA ligase</fullName>
    </alternativeName>
    <alternativeName>
        <fullName evidence="1">Beta-ketothiolase</fullName>
    </alternativeName>
    <alternativeName>
        <fullName evidence="1">Fatty acid oxidation complex subunit beta</fullName>
    </alternativeName>
</protein>
<accession>A4TM83</accession>
<feature type="chain" id="PRO_1000069525" description="3-ketoacyl-CoA thiolase">
    <location>
        <begin position="1"/>
        <end position="436"/>
    </location>
</feature>
<feature type="active site" description="Acyl-thioester intermediate" evidence="1">
    <location>
        <position position="99"/>
    </location>
</feature>
<feature type="active site" description="Proton acceptor" evidence="1">
    <location>
        <position position="392"/>
    </location>
</feature>
<feature type="active site" description="Proton acceptor" evidence="1">
    <location>
        <position position="422"/>
    </location>
</feature>
<dbReference type="EC" id="2.3.1.16" evidence="1"/>
<dbReference type="EMBL" id="CP000668">
    <property type="protein sequence ID" value="ABP40395.1"/>
    <property type="molecule type" value="Genomic_DNA"/>
</dbReference>
<dbReference type="RefSeq" id="WP_002209704.1">
    <property type="nucleotide sequence ID" value="NZ_CP009715.1"/>
</dbReference>
<dbReference type="SMR" id="A4TM83"/>
<dbReference type="GeneID" id="57975943"/>
<dbReference type="KEGG" id="ypp:YPDSF_2014"/>
<dbReference type="PATRIC" id="fig|386656.14.peg.3485"/>
<dbReference type="UniPathway" id="UPA00659"/>
<dbReference type="GO" id="GO:0005829">
    <property type="term" value="C:cytosol"/>
    <property type="evidence" value="ECO:0007669"/>
    <property type="project" value="TreeGrafter"/>
</dbReference>
<dbReference type="GO" id="GO:0003988">
    <property type="term" value="F:acetyl-CoA C-acyltransferase activity"/>
    <property type="evidence" value="ECO:0007669"/>
    <property type="project" value="UniProtKB-UniRule"/>
</dbReference>
<dbReference type="GO" id="GO:0006635">
    <property type="term" value="P:fatty acid beta-oxidation"/>
    <property type="evidence" value="ECO:0007669"/>
    <property type="project" value="UniProtKB-UniRule"/>
</dbReference>
<dbReference type="CDD" id="cd00751">
    <property type="entry name" value="thiolase"/>
    <property type="match status" value="1"/>
</dbReference>
<dbReference type="FunFam" id="3.40.47.10:FF:000011">
    <property type="entry name" value="3-ketoacyl-CoA thiolase"/>
    <property type="match status" value="1"/>
</dbReference>
<dbReference type="Gene3D" id="3.40.47.10">
    <property type="match status" value="1"/>
</dbReference>
<dbReference type="HAMAP" id="MF_01618">
    <property type="entry name" value="FadI"/>
    <property type="match status" value="1"/>
</dbReference>
<dbReference type="InterPro" id="IPR012806">
    <property type="entry name" value="Ac-CoA_C-AcTrfase_FadI"/>
</dbReference>
<dbReference type="InterPro" id="IPR002155">
    <property type="entry name" value="Thiolase"/>
</dbReference>
<dbReference type="InterPro" id="IPR016039">
    <property type="entry name" value="Thiolase-like"/>
</dbReference>
<dbReference type="InterPro" id="IPR020615">
    <property type="entry name" value="Thiolase_acyl_enz_int_AS"/>
</dbReference>
<dbReference type="InterPro" id="IPR020610">
    <property type="entry name" value="Thiolase_AS"/>
</dbReference>
<dbReference type="InterPro" id="IPR020617">
    <property type="entry name" value="Thiolase_C"/>
</dbReference>
<dbReference type="InterPro" id="IPR020613">
    <property type="entry name" value="Thiolase_CS"/>
</dbReference>
<dbReference type="InterPro" id="IPR020616">
    <property type="entry name" value="Thiolase_N"/>
</dbReference>
<dbReference type="NCBIfam" id="TIGR01930">
    <property type="entry name" value="AcCoA-C-Actrans"/>
    <property type="match status" value="1"/>
</dbReference>
<dbReference type="NCBIfam" id="TIGR02446">
    <property type="entry name" value="FadI"/>
    <property type="match status" value="1"/>
</dbReference>
<dbReference type="NCBIfam" id="NF006516">
    <property type="entry name" value="PRK08963.1"/>
    <property type="match status" value="1"/>
</dbReference>
<dbReference type="PANTHER" id="PTHR18919:SF107">
    <property type="entry name" value="ACETYL-COA ACETYLTRANSFERASE, CYTOSOLIC"/>
    <property type="match status" value="1"/>
</dbReference>
<dbReference type="PANTHER" id="PTHR18919">
    <property type="entry name" value="ACETYL-COA C-ACYLTRANSFERASE"/>
    <property type="match status" value="1"/>
</dbReference>
<dbReference type="Pfam" id="PF02803">
    <property type="entry name" value="Thiolase_C"/>
    <property type="match status" value="1"/>
</dbReference>
<dbReference type="Pfam" id="PF00108">
    <property type="entry name" value="Thiolase_N"/>
    <property type="match status" value="1"/>
</dbReference>
<dbReference type="PIRSF" id="PIRSF000429">
    <property type="entry name" value="Ac-CoA_Ac_transf"/>
    <property type="match status" value="1"/>
</dbReference>
<dbReference type="SUPFAM" id="SSF53901">
    <property type="entry name" value="Thiolase-like"/>
    <property type="match status" value="2"/>
</dbReference>
<dbReference type="PROSITE" id="PS00098">
    <property type="entry name" value="THIOLASE_1"/>
    <property type="match status" value="1"/>
</dbReference>
<dbReference type="PROSITE" id="PS00737">
    <property type="entry name" value="THIOLASE_2"/>
    <property type="match status" value="1"/>
</dbReference>
<dbReference type="PROSITE" id="PS00099">
    <property type="entry name" value="THIOLASE_3"/>
    <property type="match status" value="1"/>
</dbReference>
<organism>
    <name type="scientific">Yersinia pestis (strain Pestoides F)</name>
    <dbReference type="NCBI Taxonomy" id="386656"/>
    <lineage>
        <taxon>Bacteria</taxon>
        <taxon>Pseudomonadati</taxon>
        <taxon>Pseudomonadota</taxon>
        <taxon>Gammaproteobacteria</taxon>
        <taxon>Enterobacterales</taxon>
        <taxon>Yersiniaceae</taxon>
        <taxon>Yersinia</taxon>
    </lineage>
</organism>
<comment type="function">
    <text evidence="1">Catalyzes the final step of fatty acid oxidation in which acetyl-CoA is released and the CoA ester of a fatty acid two carbons shorter is formed.</text>
</comment>
<comment type="catalytic activity">
    <reaction evidence="1">
        <text>an acyl-CoA + acetyl-CoA = a 3-oxoacyl-CoA + CoA</text>
        <dbReference type="Rhea" id="RHEA:21564"/>
        <dbReference type="ChEBI" id="CHEBI:57287"/>
        <dbReference type="ChEBI" id="CHEBI:57288"/>
        <dbReference type="ChEBI" id="CHEBI:58342"/>
        <dbReference type="ChEBI" id="CHEBI:90726"/>
        <dbReference type="EC" id="2.3.1.16"/>
    </reaction>
</comment>
<comment type="pathway">
    <text evidence="1">Lipid metabolism; fatty acid beta-oxidation.</text>
</comment>
<comment type="subunit">
    <text evidence="1">Heterotetramer of two alpha chains (FadJ) and two beta chains (FadI).</text>
</comment>
<comment type="subcellular location">
    <subcellularLocation>
        <location evidence="1">Cytoplasm</location>
    </subcellularLocation>
</comment>
<comment type="similarity">
    <text evidence="1">Belongs to the thiolase-like superfamily. Thiolase family.</text>
</comment>
<proteinExistence type="inferred from homology"/>
<evidence type="ECO:0000255" key="1">
    <source>
        <dbReference type="HAMAP-Rule" id="MF_01618"/>
    </source>
</evidence>